<evidence type="ECO:0000305" key="1"/>
<keyword id="KW-0749">Sporulation</keyword>
<keyword id="KW-0800">Toxin</keyword>
<keyword id="KW-0843">Virulence</keyword>
<reference key="1">
    <citation type="patent" date="1993-09-21" number="US5246852">
        <title>Bacillus thuringiensis isolate active against lepidopteran pests, and genes encoding novel lepidopteran-active toxins.</title>
        <authorList>
            <person name="Payne J.M."/>
            <person name="Sick A.J."/>
        </authorList>
    </citation>
    <scope>NUCLEOTIDE SEQUENCE [GENOMIC DNA]</scope>
    <source>
        <strain>NRRL B-18484 / PS81I</strain>
    </source>
</reference>
<gene>
    <name type="primary">cry1Ad</name>
    <name type="synonym">cryIA(d)</name>
</gene>
<accession>Q03744</accession>
<protein>
    <recommendedName>
        <fullName>Pesticidal crystal protein Cry1Ad</fullName>
    </recommendedName>
    <alternativeName>
        <fullName>133 kDa crystal protein</fullName>
    </alternativeName>
    <alternativeName>
        <fullName>Crystaline entomocidal protoxin</fullName>
    </alternativeName>
    <alternativeName>
        <fullName>Insecticidal delta-endotoxin CryIA(d)</fullName>
    </alternativeName>
</protein>
<name>CR1AD_BACTA</name>
<feature type="chain" id="PRO_0000174025" description="Pesticidal crystal protein Cry1Ad">
    <location>
        <begin position="1"/>
        <end position="1179"/>
    </location>
</feature>
<organism>
    <name type="scientific">Bacillus thuringiensis subsp. aizawai</name>
    <dbReference type="NCBI Taxonomy" id="1433"/>
    <lineage>
        <taxon>Bacteria</taxon>
        <taxon>Bacillati</taxon>
        <taxon>Bacillota</taxon>
        <taxon>Bacilli</taxon>
        <taxon>Bacillales</taxon>
        <taxon>Bacillaceae</taxon>
        <taxon>Bacillus</taxon>
        <taxon>Bacillus cereus group</taxon>
    </lineage>
</organism>
<comment type="function">
    <text>Promotes colloidosmotic lysis by binding to the midgut epithelial cells of many lepidopteran larvae.</text>
</comment>
<comment type="developmental stage">
    <text>The crystal protein is produced during sporulation and is accumulated both as an inclusion and as part of the spore coat.</text>
</comment>
<comment type="miscellaneous">
    <text>Toxic segment of the protein is located in the N-terminus.</text>
</comment>
<comment type="similarity">
    <text evidence="1">Belongs to the delta endotoxin family.</text>
</comment>
<dbReference type="EMBL" id="M73250">
    <property type="protein sequence ID" value="AAA22340.1"/>
    <property type="molecule type" value="Genomic_DNA"/>
</dbReference>
<dbReference type="SMR" id="Q03744"/>
<dbReference type="GO" id="GO:0005102">
    <property type="term" value="F:signaling receptor binding"/>
    <property type="evidence" value="ECO:0007669"/>
    <property type="project" value="InterPro"/>
</dbReference>
<dbReference type="GO" id="GO:0090729">
    <property type="term" value="F:toxin activity"/>
    <property type="evidence" value="ECO:0007669"/>
    <property type="project" value="UniProtKB-KW"/>
</dbReference>
<dbReference type="GO" id="GO:0030435">
    <property type="term" value="P:sporulation resulting in formation of a cellular spore"/>
    <property type="evidence" value="ECO:0007669"/>
    <property type="project" value="UniProtKB-KW"/>
</dbReference>
<dbReference type="GO" id="GO:0001907">
    <property type="term" value="P:symbiont-mediated killing of host cell"/>
    <property type="evidence" value="ECO:0007669"/>
    <property type="project" value="InterPro"/>
</dbReference>
<dbReference type="CDD" id="cd04085">
    <property type="entry name" value="delta_endotoxin_C"/>
    <property type="match status" value="1"/>
</dbReference>
<dbReference type="Gene3D" id="2.60.120.260">
    <property type="entry name" value="Galactose-binding domain-like"/>
    <property type="match status" value="2"/>
</dbReference>
<dbReference type="Gene3D" id="2.100.10.10">
    <property type="entry name" value="Pesticidal crystal protein, central domain"/>
    <property type="match status" value="1"/>
</dbReference>
<dbReference type="Gene3D" id="1.20.190.10">
    <property type="entry name" value="Pesticidal crystal protein, N-terminal domain"/>
    <property type="match status" value="1"/>
</dbReference>
<dbReference type="InterPro" id="IPR048645">
    <property type="entry name" value="Cry1Ac-like_dom-VII"/>
</dbReference>
<dbReference type="InterPro" id="IPR041587">
    <property type="entry name" value="Cry_V"/>
</dbReference>
<dbReference type="InterPro" id="IPR008979">
    <property type="entry name" value="Galactose-bd-like_sf"/>
</dbReference>
<dbReference type="InterPro" id="IPR038979">
    <property type="entry name" value="Pest_crys"/>
</dbReference>
<dbReference type="InterPro" id="IPR005638">
    <property type="entry name" value="Pest_crys_dom-III"/>
</dbReference>
<dbReference type="InterPro" id="IPR005639">
    <property type="entry name" value="Pest_crys_dom_I"/>
</dbReference>
<dbReference type="InterPro" id="IPR036716">
    <property type="entry name" value="Pest_crys_N_sf"/>
</dbReference>
<dbReference type="InterPro" id="IPR036399">
    <property type="entry name" value="Pest_cryst_cen_dom_sf"/>
</dbReference>
<dbReference type="InterPro" id="IPR001178">
    <property type="entry name" value="Pest_cryst_dom_II"/>
</dbReference>
<dbReference type="PANTHER" id="PTHR37003">
    <property type="entry name" value="ENDOTOXIN_N DOMAIN-CONTAINING PROTEIN-RELATED"/>
    <property type="match status" value="1"/>
</dbReference>
<dbReference type="PANTHER" id="PTHR37003:SF2">
    <property type="entry name" value="PESTICIDAL CRYSTAL PROTEIN N-TERMINAL DOMAIN-CONTAINING PROTEIN"/>
    <property type="match status" value="1"/>
</dbReference>
<dbReference type="Pfam" id="PF17997">
    <property type="entry name" value="Cry1Ac_D5"/>
    <property type="match status" value="1"/>
</dbReference>
<dbReference type="Pfam" id="PF21463">
    <property type="entry name" value="Cry1Ac_dom-VII"/>
    <property type="match status" value="1"/>
</dbReference>
<dbReference type="Pfam" id="PF03944">
    <property type="entry name" value="Endotoxin_C"/>
    <property type="match status" value="1"/>
</dbReference>
<dbReference type="Pfam" id="PF00555">
    <property type="entry name" value="Endotoxin_M"/>
    <property type="match status" value="1"/>
</dbReference>
<dbReference type="Pfam" id="PF03945">
    <property type="entry name" value="Endotoxin_N"/>
    <property type="match status" value="1"/>
</dbReference>
<dbReference type="SUPFAM" id="SSF51096">
    <property type="entry name" value="delta-Endotoxin (insectocide), middle domain"/>
    <property type="match status" value="1"/>
</dbReference>
<dbReference type="SUPFAM" id="SSF56849">
    <property type="entry name" value="delta-Endotoxin (insectocide), N-terminal domain"/>
    <property type="match status" value="1"/>
</dbReference>
<dbReference type="SUPFAM" id="SSF49785">
    <property type="entry name" value="Galactose-binding domain-like"/>
    <property type="match status" value="1"/>
</dbReference>
<proteinExistence type="evidence at transcript level"/>
<sequence length="1179" mass="133377">MEIMNNQNQCVPYNCLNDPTIEILEGERIETGYTPIDISLSLTQFLLSEFVPGAGFVLGLIDLIWGFVGPSQWDAFLVQIEQLINQRIEEFARNQAISRLEGLSNLYQIYAEAFREWEADPTNPALTEEMRIQFNDMNSALTTAIPLFTVQNYQVPLLSVYVQAANLHLSVLRDVSVFGQRWGFDVATINSRYNDLTRLIGTYTDYAVRWYNTGLERVWGPDSRDWVRYNQFRRELTLTVLDIVSLFPNYDSRTYPIRTVSQLTREIYTNPVLENFDGSFRGMAQRIEQNIRQPHLMDLLNSITIYTDVHRGFNYWSGHQITASPVGFAGPEFTFPRYGTMGNAAPPVLISTTGLGIFRTLSSPLYRRIILGSGPNNQNLFVLDGTEFSFASLTADLPSTIYRQRGTVDSLDVIPPQDNSVPARAGFSHRLSHVTMLSQAAGAVYTLRAPTFSWRHRSAEFSNLIPSSQITQIPLTKSINLGSGTSVVKGPGFTGGDILRITSPGQISTLRVTITAPLSQRYRVRIRYASTTNLQFHTSIDGRPINQGNFSATMSSGGNLQSGSFRTAGFTTPFNFSNGSSIFTLSAHVFNSGNEVYIERIEFVPAEVTFEAEYDLERAQEAVNALFTSSNQLGLKTNVTDYHIDQVSNLVECLSGEFCLDEKRELSEKVKHANRLSDERNLLQDPNFRGINRQPDRGWRGSTDITIQGGDDVFKENYVTLPGTFNECYPTYLYQKIDESKLKAYTRYQLRGYIEDSQHLEIYLIRYNTKHETVNVPGTGSLWPLSVENPIGKCGEPNRCAPQLEWNPDLDCSCRDGEKCAHHSHHFSLDIDIGCTDLNENLGVWVIFKIKMQDGHARLGNLEFLEEKPLVGESLARVKRAEKKWRDKREKLQVETNIVYKEAKESVDALFVNSQYDRLQADTDIAMIHAADKRVHRIREAYLPELSVIPGVNAGIFEELEGRIFTAYSLYDARNVIKNGDFNNGLSCWNVKGHVDVEEQNNHRSVLVVPEWEAEVSQEVRVCPGRGYILRVTAYKEGYGEGCVTIHEIEDNTDELKFSNCVEEEVYPNNTVTCNDYTANQEEYGGAYTSRNRGYGESYESNSSIPAEYAPVYEEAYIDGRKENPCESNRGYGDYTPLPAGYVTKELEYFPETDKVWIEIGETEGTFIVDSVELLLMEE</sequence>